<comment type="function">
    <text evidence="1">Catalyzes the NAD(+)-dependent oxidation of L-threonine to 2-amino-3-ketobutyrate.</text>
</comment>
<comment type="catalytic activity">
    <reaction evidence="1">
        <text>L-threonine + NAD(+) = (2S)-2-amino-3-oxobutanoate + NADH + H(+)</text>
        <dbReference type="Rhea" id="RHEA:13161"/>
        <dbReference type="ChEBI" id="CHEBI:15378"/>
        <dbReference type="ChEBI" id="CHEBI:57540"/>
        <dbReference type="ChEBI" id="CHEBI:57926"/>
        <dbReference type="ChEBI" id="CHEBI:57945"/>
        <dbReference type="ChEBI" id="CHEBI:78948"/>
        <dbReference type="EC" id="1.1.1.103"/>
    </reaction>
</comment>
<comment type="cofactor">
    <cofactor evidence="1">
        <name>Zn(2+)</name>
        <dbReference type="ChEBI" id="CHEBI:29105"/>
    </cofactor>
    <text evidence="1">Binds 2 Zn(2+) ions per subunit.</text>
</comment>
<comment type="pathway">
    <text evidence="1">Amino-acid degradation; L-threonine degradation via oxydo-reductase pathway; glycine from L-threonine: step 1/2.</text>
</comment>
<comment type="subunit">
    <text evidence="1">Homotetramer.</text>
</comment>
<comment type="subcellular location">
    <subcellularLocation>
        <location evidence="1">Cytoplasm</location>
    </subcellularLocation>
</comment>
<comment type="similarity">
    <text evidence="1">Belongs to the zinc-containing alcohol dehydrogenase family.</text>
</comment>
<evidence type="ECO:0000255" key="1">
    <source>
        <dbReference type="HAMAP-Rule" id="MF_00627"/>
    </source>
</evidence>
<keyword id="KW-0963">Cytoplasm</keyword>
<keyword id="KW-0479">Metal-binding</keyword>
<keyword id="KW-0520">NAD</keyword>
<keyword id="KW-0560">Oxidoreductase</keyword>
<keyword id="KW-0862">Zinc</keyword>
<reference key="1">
    <citation type="submission" date="2006-08" db="EMBL/GenBank/DDBJ databases">
        <title>Complete sequence of chromosome 2 of Burkholderia cenocepacia HI2424.</title>
        <authorList>
            <person name="Copeland A."/>
            <person name="Lucas S."/>
            <person name="Lapidus A."/>
            <person name="Barry K."/>
            <person name="Detter J.C."/>
            <person name="Glavina del Rio T."/>
            <person name="Hammon N."/>
            <person name="Israni S."/>
            <person name="Pitluck S."/>
            <person name="Chain P."/>
            <person name="Malfatti S."/>
            <person name="Shin M."/>
            <person name="Vergez L."/>
            <person name="Schmutz J."/>
            <person name="Larimer F."/>
            <person name="Land M."/>
            <person name="Hauser L."/>
            <person name="Kyrpides N."/>
            <person name="Kim E."/>
            <person name="LiPuma J.J."/>
            <person name="Gonzalez C.F."/>
            <person name="Konstantinidis K."/>
            <person name="Tiedje J.M."/>
            <person name="Richardson P."/>
        </authorList>
    </citation>
    <scope>NUCLEOTIDE SEQUENCE [LARGE SCALE GENOMIC DNA]</scope>
    <source>
        <strain>HI2424</strain>
    </source>
</reference>
<gene>
    <name evidence="1" type="primary">tdh</name>
    <name type="ordered locus">Bcen2424_5702</name>
</gene>
<name>TDH_BURCH</name>
<sequence length="342" mass="37358">MKALAKLERGPGLTLTRVKRPEVGHNDVLIKIRRTAICGTDIHIWKWDDWAQKTIPVPMHVGHEYVGEIVEMGQEVRGFAIGDRVSGEGHITCGFCRNCRAGRRHLCRNTVGVGVNREGAFAEYLAIPAFNAFKIPPEISDDLASIFDPFGNATHTALSFNLVGEDVLITGAGPIGIMAVAIAKHVGARNVVITDINDYRLELARKMGATRAVNVARESLRDVMADLHMTEGFDVGLEMSGVPSAFTSLLEAMNHGGKVALLGIPPAQTAIDWNQVIFKGLEIKGIYGREMFETWYKMVAMLQSGLDLSPIITHRFAADDYEQGFAAMLSGESGKVILDWTA</sequence>
<organism>
    <name type="scientific">Burkholderia cenocepacia (strain HI2424)</name>
    <dbReference type="NCBI Taxonomy" id="331272"/>
    <lineage>
        <taxon>Bacteria</taxon>
        <taxon>Pseudomonadati</taxon>
        <taxon>Pseudomonadota</taxon>
        <taxon>Betaproteobacteria</taxon>
        <taxon>Burkholderiales</taxon>
        <taxon>Burkholderiaceae</taxon>
        <taxon>Burkholderia</taxon>
        <taxon>Burkholderia cepacia complex</taxon>
    </lineage>
</organism>
<protein>
    <recommendedName>
        <fullName evidence="1">L-threonine 3-dehydrogenase</fullName>
        <shortName evidence="1">TDH</shortName>
        <ecNumber evidence="1">1.1.1.103</ecNumber>
    </recommendedName>
</protein>
<proteinExistence type="inferred from homology"/>
<feature type="chain" id="PRO_1000051618" description="L-threonine 3-dehydrogenase">
    <location>
        <begin position="1"/>
        <end position="342"/>
    </location>
</feature>
<feature type="active site" description="Charge relay system" evidence="1">
    <location>
        <position position="40"/>
    </location>
</feature>
<feature type="active site" description="Charge relay system" evidence="1">
    <location>
        <position position="43"/>
    </location>
</feature>
<feature type="binding site" evidence="1">
    <location>
        <position position="38"/>
    </location>
    <ligand>
        <name>Zn(2+)</name>
        <dbReference type="ChEBI" id="CHEBI:29105"/>
        <label>1</label>
        <note>catalytic</note>
    </ligand>
</feature>
<feature type="binding site" evidence="1">
    <location>
        <position position="63"/>
    </location>
    <ligand>
        <name>Zn(2+)</name>
        <dbReference type="ChEBI" id="CHEBI:29105"/>
        <label>1</label>
        <note>catalytic</note>
    </ligand>
</feature>
<feature type="binding site" evidence="1">
    <location>
        <position position="64"/>
    </location>
    <ligand>
        <name>Zn(2+)</name>
        <dbReference type="ChEBI" id="CHEBI:29105"/>
        <label>1</label>
        <note>catalytic</note>
    </ligand>
</feature>
<feature type="binding site" evidence="1">
    <location>
        <position position="93"/>
    </location>
    <ligand>
        <name>Zn(2+)</name>
        <dbReference type="ChEBI" id="CHEBI:29105"/>
        <label>2</label>
    </ligand>
</feature>
<feature type="binding site" evidence="1">
    <location>
        <position position="96"/>
    </location>
    <ligand>
        <name>Zn(2+)</name>
        <dbReference type="ChEBI" id="CHEBI:29105"/>
        <label>2</label>
    </ligand>
</feature>
<feature type="binding site" evidence="1">
    <location>
        <position position="99"/>
    </location>
    <ligand>
        <name>Zn(2+)</name>
        <dbReference type="ChEBI" id="CHEBI:29105"/>
        <label>2</label>
    </ligand>
</feature>
<feature type="binding site" evidence="1">
    <location>
        <position position="107"/>
    </location>
    <ligand>
        <name>Zn(2+)</name>
        <dbReference type="ChEBI" id="CHEBI:29105"/>
        <label>2</label>
    </ligand>
</feature>
<feature type="binding site" evidence="1">
    <location>
        <position position="175"/>
    </location>
    <ligand>
        <name>NAD(+)</name>
        <dbReference type="ChEBI" id="CHEBI:57540"/>
    </ligand>
</feature>
<feature type="binding site" evidence="1">
    <location>
        <position position="195"/>
    </location>
    <ligand>
        <name>NAD(+)</name>
        <dbReference type="ChEBI" id="CHEBI:57540"/>
    </ligand>
</feature>
<feature type="binding site" evidence="1">
    <location>
        <position position="200"/>
    </location>
    <ligand>
        <name>NAD(+)</name>
        <dbReference type="ChEBI" id="CHEBI:57540"/>
    </ligand>
</feature>
<feature type="binding site" evidence="1">
    <location>
        <begin position="262"/>
        <end position="264"/>
    </location>
    <ligand>
        <name>NAD(+)</name>
        <dbReference type="ChEBI" id="CHEBI:57540"/>
    </ligand>
</feature>
<feature type="binding site" evidence="1">
    <location>
        <begin position="286"/>
        <end position="287"/>
    </location>
    <ligand>
        <name>NAD(+)</name>
        <dbReference type="ChEBI" id="CHEBI:57540"/>
    </ligand>
</feature>
<feature type="site" description="Important for catalytic activity for the proton relay mechanism but does not participate directly in the coordination of zinc atom" evidence="1">
    <location>
        <position position="148"/>
    </location>
</feature>
<accession>A0B459</accession>
<dbReference type="EC" id="1.1.1.103" evidence="1"/>
<dbReference type="EMBL" id="CP000459">
    <property type="protein sequence ID" value="ABK12435.1"/>
    <property type="molecule type" value="Genomic_DNA"/>
</dbReference>
<dbReference type="RefSeq" id="WP_011548747.1">
    <property type="nucleotide sequence ID" value="NC_008543.1"/>
</dbReference>
<dbReference type="SMR" id="A0B459"/>
<dbReference type="GeneID" id="83051266"/>
<dbReference type="KEGG" id="bch:Bcen2424_5702"/>
<dbReference type="HOGENOM" id="CLU_026673_11_0_4"/>
<dbReference type="UniPathway" id="UPA00046">
    <property type="reaction ID" value="UER00505"/>
</dbReference>
<dbReference type="GO" id="GO:0005737">
    <property type="term" value="C:cytoplasm"/>
    <property type="evidence" value="ECO:0007669"/>
    <property type="project" value="UniProtKB-SubCell"/>
</dbReference>
<dbReference type="GO" id="GO:0008743">
    <property type="term" value="F:L-threonine 3-dehydrogenase activity"/>
    <property type="evidence" value="ECO:0007669"/>
    <property type="project" value="UniProtKB-UniRule"/>
</dbReference>
<dbReference type="GO" id="GO:0008270">
    <property type="term" value="F:zinc ion binding"/>
    <property type="evidence" value="ECO:0007669"/>
    <property type="project" value="UniProtKB-UniRule"/>
</dbReference>
<dbReference type="GO" id="GO:0019518">
    <property type="term" value="P:L-threonine catabolic process to glycine"/>
    <property type="evidence" value="ECO:0007669"/>
    <property type="project" value="UniProtKB-UniPathway"/>
</dbReference>
<dbReference type="Gene3D" id="3.90.180.10">
    <property type="entry name" value="Medium-chain alcohol dehydrogenases, catalytic domain"/>
    <property type="match status" value="1"/>
</dbReference>
<dbReference type="Gene3D" id="3.40.50.720">
    <property type="entry name" value="NAD(P)-binding Rossmann-like Domain"/>
    <property type="match status" value="1"/>
</dbReference>
<dbReference type="HAMAP" id="MF_00627">
    <property type="entry name" value="Thr_dehydrog"/>
    <property type="match status" value="1"/>
</dbReference>
<dbReference type="InterPro" id="IPR013149">
    <property type="entry name" value="ADH-like_C"/>
</dbReference>
<dbReference type="InterPro" id="IPR013154">
    <property type="entry name" value="ADH-like_N"/>
</dbReference>
<dbReference type="InterPro" id="IPR002328">
    <property type="entry name" value="ADH_Zn_CS"/>
</dbReference>
<dbReference type="InterPro" id="IPR011032">
    <property type="entry name" value="GroES-like_sf"/>
</dbReference>
<dbReference type="InterPro" id="IPR004627">
    <property type="entry name" value="L-Threonine_3-DHase"/>
</dbReference>
<dbReference type="InterPro" id="IPR036291">
    <property type="entry name" value="NAD(P)-bd_dom_sf"/>
</dbReference>
<dbReference type="InterPro" id="IPR020843">
    <property type="entry name" value="PKS_ER"/>
</dbReference>
<dbReference type="InterPro" id="IPR050129">
    <property type="entry name" value="Zn_alcohol_dh"/>
</dbReference>
<dbReference type="NCBIfam" id="NF003808">
    <property type="entry name" value="PRK05396.1"/>
    <property type="match status" value="1"/>
</dbReference>
<dbReference type="NCBIfam" id="TIGR00692">
    <property type="entry name" value="tdh"/>
    <property type="match status" value="1"/>
</dbReference>
<dbReference type="PANTHER" id="PTHR43401">
    <property type="entry name" value="L-THREONINE 3-DEHYDROGENASE"/>
    <property type="match status" value="1"/>
</dbReference>
<dbReference type="PANTHER" id="PTHR43401:SF2">
    <property type="entry name" value="L-THREONINE 3-DEHYDROGENASE"/>
    <property type="match status" value="1"/>
</dbReference>
<dbReference type="Pfam" id="PF08240">
    <property type="entry name" value="ADH_N"/>
    <property type="match status" value="1"/>
</dbReference>
<dbReference type="Pfam" id="PF00107">
    <property type="entry name" value="ADH_zinc_N"/>
    <property type="match status" value="1"/>
</dbReference>
<dbReference type="SMART" id="SM00829">
    <property type="entry name" value="PKS_ER"/>
    <property type="match status" value="1"/>
</dbReference>
<dbReference type="SUPFAM" id="SSF50129">
    <property type="entry name" value="GroES-like"/>
    <property type="match status" value="1"/>
</dbReference>
<dbReference type="SUPFAM" id="SSF51735">
    <property type="entry name" value="NAD(P)-binding Rossmann-fold domains"/>
    <property type="match status" value="1"/>
</dbReference>
<dbReference type="PROSITE" id="PS00059">
    <property type="entry name" value="ADH_ZINC"/>
    <property type="match status" value="1"/>
</dbReference>